<evidence type="ECO:0000255" key="1">
    <source>
        <dbReference type="HAMAP-Rule" id="MF_00540"/>
    </source>
</evidence>
<sequence length="362" mass="39695">MTDMPTLDAIRQAPKALLHDHLDGGLRPETVLDIAGQVGYDGLPSTDAGELASWFRTQSHSGSLERYLEPFSHTVAVMQTPEALYRVAYECVEDLAADAVVYAEIRFAPELHINQGLTFDEIVDAVLAGFAAGERACAGAGCPIKVRLLVTAMRHAAMSREIAELAIRFRDKGVVGFDIAGAEAGYPPSRHLDAFEYMRDNNARFTIHAGEAFGLPSIHEAIAFCGADRLGHGVRIVDDIEVGPDGDVKLGRLAAILRDKRIPLELCPSSNVQTGAVASIAEHPFDLLARSRFRVTVNTDNRLMSDTSMSQEMYRLVETFGYGWSDIQRFTINAMKSAFIAFDERLEIIDEVIKPRFAVLIG</sequence>
<gene>
    <name evidence="1" type="primary">add</name>
    <name type="ordered locus">MMAR_1206</name>
</gene>
<dbReference type="EC" id="3.5.4.4" evidence="1"/>
<dbReference type="EMBL" id="CP000854">
    <property type="protein sequence ID" value="ACC39664.1"/>
    <property type="molecule type" value="Genomic_DNA"/>
</dbReference>
<dbReference type="RefSeq" id="WP_012393086.1">
    <property type="nucleotide sequence ID" value="NC_010612.1"/>
</dbReference>
<dbReference type="SMR" id="B2HDU8"/>
<dbReference type="STRING" id="216594.MMAR_1206"/>
<dbReference type="GeneID" id="34339957"/>
<dbReference type="KEGG" id="mmi:MMAR_1206"/>
<dbReference type="eggNOG" id="COG1816">
    <property type="taxonomic scope" value="Bacteria"/>
</dbReference>
<dbReference type="HOGENOM" id="CLU_039228_0_0_11"/>
<dbReference type="OrthoDB" id="9779574at2"/>
<dbReference type="Proteomes" id="UP000001190">
    <property type="component" value="Chromosome"/>
</dbReference>
<dbReference type="GO" id="GO:0005829">
    <property type="term" value="C:cytosol"/>
    <property type="evidence" value="ECO:0007669"/>
    <property type="project" value="TreeGrafter"/>
</dbReference>
<dbReference type="GO" id="GO:0046936">
    <property type="term" value="F:2'-deoxyadenosine deaminase activity"/>
    <property type="evidence" value="ECO:0007669"/>
    <property type="project" value="RHEA"/>
</dbReference>
<dbReference type="GO" id="GO:0004000">
    <property type="term" value="F:adenosine deaminase activity"/>
    <property type="evidence" value="ECO:0007669"/>
    <property type="project" value="UniProtKB-UniRule"/>
</dbReference>
<dbReference type="GO" id="GO:0008270">
    <property type="term" value="F:zinc ion binding"/>
    <property type="evidence" value="ECO:0007669"/>
    <property type="project" value="UniProtKB-UniRule"/>
</dbReference>
<dbReference type="GO" id="GO:0006154">
    <property type="term" value="P:adenosine catabolic process"/>
    <property type="evidence" value="ECO:0007669"/>
    <property type="project" value="TreeGrafter"/>
</dbReference>
<dbReference type="GO" id="GO:0043103">
    <property type="term" value="P:hypoxanthine salvage"/>
    <property type="evidence" value="ECO:0007669"/>
    <property type="project" value="TreeGrafter"/>
</dbReference>
<dbReference type="GO" id="GO:0046103">
    <property type="term" value="P:inosine biosynthetic process"/>
    <property type="evidence" value="ECO:0007669"/>
    <property type="project" value="TreeGrafter"/>
</dbReference>
<dbReference type="GO" id="GO:0009117">
    <property type="term" value="P:nucleotide metabolic process"/>
    <property type="evidence" value="ECO:0007669"/>
    <property type="project" value="UniProtKB-KW"/>
</dbReference>
<dbReference type="GO" id="GO:0009168">
    <property type="term" value="P:purine ribonucleoside monophosphate biosynthetic process"/>
    <property type="evidence" value="ECO:0007669"/>
    <property type="project" value="UniProtKB-UniRule"/>
</dbReference>
<dbReference type="FunFam" id="3.20.20.140:FF:000020">
    <property type="entry name" value="Adenosine deaminase"/>
    <property type="match status" value="1"/>
</dbReference>
<dbReference type="Gene3D" id="3.20.20.140">
    <property type="entry name" value="Metal-dependent hydrolases"/>
    <property type="match status" value="1"/>
</dbReference>
<dbReference type="HAMAP" id="MF_00540">
    <property type="entry name" value="A_deaminase"/>
    <property type="match status" value="1"/>
</dbReference>
<dbReference type="InterPro" id="IPR028893">
    <property type="entry name" value="A_deaminase"/>
</dbReference>
<dbReference type="InterPro" id="IPR001365">
    <property type="entry name" value="A_deaminase_dom"/>
</dbReference>
<dbReference type="InterPro" id="IPR006330">
    <property type="entry name" value="Ado/ade_deaminase"/>
</dbReference>
<dbReference type="InterPro" id="IPR032466">
    <property type="entry name" value="Metal_Hydrolase"/>
</dbReference>
<dbReference type="NCBIfam" id="TIGR01430">
    <property type="entry name" value="aden_deam"/>
    <property type="match status" value="1"/>
</dbReference>
<dbReference type="NCBIfam" id="NF006847">
    <property type="entry name" value="PRK09358.1-2"/>
    <property type="match status" value="1"/>
</dbReference>
<dbReference type="PANTHER" id="PTHR11409">
    <property type="entry name" value="ADENOSINE DEAMINASE"/>
    <property type="match status" value="1"/>
</dbReference>
<dbReference type="PANTHER" id="PTHR11409:SF43">
    <property type="entry name" value="ADENOSINE DEAMINASE"/>
    <property type="match status" value="1"/>
</dbReference>
<dbReference type="Pfam" id="PF00962">
    <property type="entry name" value="A_deaminase"/>
    <property type="match status" value="1"/>
</dbReference>
<dbReference type="SUPFAM" id="SSF51556">
    <property type="entry name" value="Metallo-dependent hydrolases"/>
    <property type="match status" value="1"/>
</dbReference>
<organism>
    <name type="scientific">Mycobacterium marinum (strain ATCC BAA-535 / M)</name>
    <dbReference type="NCBI Taxonomy" id="216594"/>
    <lineage>
        <taxon>Bacteria</taxon>
        <taxon>Bacillati</taxon>
        <taxon>Actinomycetota</taxon>
        <taxon>Actinomycetes</taxon>
        <taxon>Mycobacteriales</taxon>
        <taxon>Mycobacteriaceae</taxon>
        <taxon>Mycobacterium</taxon>
        <taxon>Mycobacterium ulcerans group</taxon>
    </lineage>
</organism>
<feature type="chain" id="PRO_1000128852" description="Adenosine deaminase">
    <location>
        <begin position="1"/>
        <end position="362"/>
    </location>
</feature>
<feature type="active site" description="Proton donor" evidence="1">
    <location>
        <position position="211"/>
    </location>
</feature>
<feature type="binding site" evidence="1">
    <location>
        <position position="19"/>
    </location>
    <ligand>
        <name>Zn(2+)</name>
        <dbReference type="ChEBI" id="CHEBI:29105"/>
        <note>catalytic</note>
    </ligand>
</feature>
<feature type="binding site" evidence="1">
    <location>
        <position position="21"/>
    </location>
    <ligand>
        <name>substrate</name>
    </ligand>
</feature>
<feature type="binding site" evidence="1">
    <location>
        <position position="21"/>
    </location>
    <ligand>
        <name>Zn(2+)</name>
        <dbReference type="ChEBI" id="CHEBI:29105"/>
        <note>catalytic</note>
    </ligand>
</feature>
<feature type="binding site" evidence="1">
    <location>
        <position position="23"/>
    </location>
    <ligand>
        <name>substrate</name>
    </ligand>
</feature>
<feature type="binding site" evidence="1">
    <location>
        <position position="181"/>
    </location>
    <ligand>
        <name>substrate</name>
    </ligand>
</feature>
<feature type="binding site" evidence="1">
    <location>
        <position position="208"/>
    </location>
    <ligand>
        <name>Zn(2+)</name>
        <dbReference type="ChEBI" id="CHEBI:29105"/>
        <note>catalytic</note>
    </ligand>
</feature>
<feature type="binding site" evidence="1">
    <location>
        <position position="300"/>
    </location>
    <ligand>
        <name>Zn(2+)</name>
        <dbReference type="ChEBI" id="CHEBI:29105"/>
        <note>catalytic</note>
    </ligand>
</feature>
<feature type="site" description="Important for catalytic activity" evidence="1">
    <location>
        <position position="232"/>
    </location>
</feature>
<reference key="1">
    <citation type="journal article" date="2008" name="Genome Res.">
        <title>Insights from the complete genome sequence of Mycobacterium marinum on the evolution of Mycobacterium tuberculosis.</title>
        <authorList>
            <person name="Stinear T.P."/>
            <person name="Seemann T."/>
            <person name="Harrison P.F."/>
            <person name="Jenkin G.A."/>
            <person name="Davies J.K."/>
            <person name="Johnson P.D."/>
            <person name="Abdellah Z."/>
            <person name="Arrowsmith C."/>
            <person name="Chillingworth T."/>
            <person name="Churcher C."/>
            <person name="Clarke K."/>
            <person name="Cronin A."/>
            <person name="Davis P."/>
            <person name="Goodhead I."/>
            <person name="Holroyd N."/>
            <person name="Jagels K."/>
            <person name="Lord A."/>
            <person name="Moule S."/>
            <person name="Mungall K."/>
            <person name="Norbertczak H."/>
            <person name="Quail M.A."/>
            <person name="Rabbinowitsch E."/>
            <person name="Walker D."/>
            <person name="White B."/>
            <person name="Whitehead S."/>
            <person name="Small P.L."/>
            <person name="Brosch R."/>
            <person name="Ramakrishnan L."/>
            <person name="Fischbach M.A."/>
            <person name="Parkhill J."/>
            <person name="Cole S.T."/>
        </authorList>
    </citation>
    <scope>NUCLEOTIDE SEQUENCE [LARGE SCALE GENOMIC DNA]</scope>
    <source>
        <strain>ATCC BAA-535 / M</strain>
    </source>
</reference>
<proteinExistence type="inferred from homology"/>
<name>ADD_MYCMM</name>
<comment type="function">
    <text evidence="1">Catalyzes the hydrolytic deamination of adenosine and 2-deoxyadenosine.</text>
</comment>
<comment type="catalytic activity">
    <reaction evidence="1">
        <text>adenosine + H2O + H(+) = inosine + NH4(+)</text>
        <dbReference type="Rhea" id="RHEA:24408"/>
        <dbReference type="ChEBI" id="CHEBI:15377"/>
        <dbReference type="ChEBI" id="CHEBI:15378"/>
        <dbReference type="ChEBI" id="CHEBI:16335"/>
        <dbReference type="ChEBI" id="CHEBI:17596"/>
        <dbReference type="ChEBI" id="CHEBI:28938"/>
        <dbReference type="EC" id="3.5.4.4"/>
    </reaction>
    <physiologicalReaction direction="left-to-right" evidence="1">
        <dbReference type="Rhea" id="RHEA:24409"/>
    </physiologicalReaction>
</comment>
<comment type="catalytic activity">
    <reaction evidence="1">
        <text>2'-deoxyadenosine + H2O + H(+) = 2'-deoxyinosine + NH4(+)</text>
        <dbReference type="Rhea" id="RHEA:28190"/>
        <dbReference type="ChEBI" id="CHEBI:15377"/>
        <dbReference type="ChEBI" id="CHEBI:15378"/>
        <dbReference type="ChEBI" id="CHEBI:17256"/>
        <dbReference type="ChEBI" id="CHEBI:28938"/>
        <dbReference type="ChEBI" id="CHEBI:28997"/>
        <dbReference type="EC" id="3.5.4.4"/>
    </reaction>
    <physiologicalReaction direction="left-to-right" evidence="1">
        <dbReference type="Rhea" id="RHEA:28191"/>
    </physiologicalReaction>
</comment>
<comment type="cofactor">
    <cofactor evidence="1">
        <name>Zn(2+)</name>
        <dbReference type="ChEBI" id="CHEBI:29105"/>
    </cofactor>
    <text evidence="1">Binds 1 zinc ion per subunit.</text>
</comment>
<comment type="similarity">
    <text evidence="1">Belongs to the metallo-dependent hydrolases superfamily. Adenosine and AMP deaminases family. Adenosine deaminase subfamily.</text>
</comment>
<keyword id="KW-0378">Hydrolase</keyword>
<keyword id="KW-0479">Metal-binding</keyword>
<keyword id="KW-0546">Nucleotide metabolism</keyword>
<keyword id="KW-1185">Reference proteome</keyword>
<keyword id="KW-0862">Zinc</keyword>
<accession>B2HDU8</accession>
<protein>
    <recommendedName>
        <fullName evidence="1">Adenosine deaminase</fullName>
        <ecNumber evidence="1">3.5.4.4</ecNumber>
    </recommendedName>
    <alternativeName>
        <fullName evidence="1">Adenosine aminohydrolase</fullName>
    </alternativeName>
</protein>